<sequence>MAKHLYKTPIPSTRKGTVDRQVKSNPRNNLIHGRHRCGKGRNSRGIITARHRGGGHKRLYRKIDFRRNQKDISGRIVTIEYDPNRNAYICLIHYGDGEKRYILHPRGAIIGDTIVSGTKVPISMGNALPLTDMPLGTAMHNIEITRGRGGQLARAAGAVAKLIAKEGKSATLRLPSGEVRLVSQNCLATVGQVGNVGVNQKSLGRAGSKCWLGKRPVVRGVVMNPVDHPHGGGEGKAPIGRKKPTTPWGYPALGRRTRKRKKYSDSFILRRRK</sequence>
<feature type="chain" id="PRO_0000129678" description="Large ribosomal subunit protein uL2cz/uL2cy">
    <location>
        <begin position="1"/>
        <end position="273"/>
    </location>
</feature>
<feature type="region of interest" description="Disordered" evidence="3">
    <location>
        <begin position="1"/>
        <end position="27"/>
    </location>
</feature>
<feature type="region of interest" description="Disordered" evidence="3">
    <location>
        <begin position="225"/>
        <end position="273"/>
    </location>
</feature>
<name>RK2_HORVU</name>
<evidence type="ECO:0000250" key="1"/>
<evidence type="ECO:0000255" key="2">
    <source>
        <dbReference type="HAMAP-Rule" id="MF_01320"/>
    </source>
</evidence>
<evidence type="ECO:0000256" key="3">
    <source>
        <dbReference type="SAM" id="MobiDB-lite"/>
    </source>
</evidence>
<evidence type="ECO:0000269" key="4">
    <source>
    </source>
</evidence>
<evidence type="ECO:0000305" key="5"/>
<accession>P41096</accession>
<accession>A1E9N2</accession>
<keyword id="KW-0150">Chloroplast</keyword>
<keyword id="KW-0934">Plastid</keyword>
<keyword id="KW-0687">Ribonucleoprotein</keyword>
<keyword id="KW-0689">Ribosomal protein</keyword>
<keyword id="KW-0691">RNA editing</keyword>
<protein>
    <recommendedName>
        <fullName evidence="2">Large ribosomal subunit protein uL2cz/uL2cy</fullName>
    </recommendedName>
    <alternativeName>
        <fullName evidence="5">50S ribosomal protein L2, chloroplastic</fullName>
    </alternativeName>
</protein>
<organism>
    <name type="scientific">Hordeum vulgare</name>
    <name type="common">Barley</name>
    <dbReference type="NCBI Taxonomy" id="4513"/>
    <lineage>
        <taxon>Eukaryota</taxon>
        <taxon>Viridiplantae</taxon>
        <taxon>Streptophyta</taxon>
        <taxon>Embryophyta</taxon>
        <taxon>Tracheophyta</taxon>
        <taxon>Spermatophyta</taxon>
        <taxon>Magnoliopsida</taxon>
        <taxon>Liliopsida</taxon>
        <taxon>Poales</taxon>
        <taxon>Poaceae</taxon>
        <taxon>BOP clade</taxon>
        <taxon>Pooideae</taxon>
        <taxon>Triticodae</taxon>
        <taxon>Triticeae</taxon>
        <taxon>Hordeinae</taxon>
        <taxon>Hordeum</taxon>
    </lineage>
</organism>
<gene>
    <name type="primary">rpl2-A</name>
</gene>
<gene>
    <name type="primary">rpl2-B</name>
</gene>
<proteinExistence type="evidence at transcript level"/>
<comment type="subunit">
    <text evidence="1">Part of the 50S ribosomal subunit.</text>
</comment>
<comment type="subcellular location">
    <subcellularLocation>
        <location>Plastid</location>
        <location>Chloroplast</location>
    </subcellularLocation>
</comment>
<comment type="RNA editing">
    <location>
        <position position="1" evidence="4"/>
    </location>
    <text>The initiator methionine is created by RNA editing.</text>
</comment>
<comment type="similarity">
    <text evidence="5">Belongs to the universal ribosomal protein uL2 family.</text>
</comment>
<geneLocation type="chloroplast"/>
<dbReference type="EMBL" id="X78185">
    <property type="protein sequence ID" value="CAA55028.1"/>
    <property type="molecule type" value="Genomic_DNA"/>
</dbReference>
<dbReference type="EMBL" id="EF115541">
    <property type="protein sequence ID" value="ABK79453.1"/>
    <property type="molecule type" value="Genomic_DNA"/>
</dbReference>
<dbReference type="EMBL" id="EF115541">
    <property type="protein sequence ID" value="ABK79474.1"/>
    <property type="molecule type" value="Genomic_DNA"/>
</dbReference>
<dbReference type="SMR" id="P41096"/>
<dbReference type="GO" id="GO:0009507">
    <property type="term" value="C:chloroplast"/>
    <property type="evidence" value="ECO:0007669"/>
    <property type="project" value="UniProtKB-SubCell"/>
</dbReference>
<dbReference type="GO" id="GO:0005762">
    <property type="term" value="C:mitochondrial large ribosomal subunit"/>
    <property type="evidence" value="ECO:0007669"/>
    <property type="project" value="TreeGrafter"/>
</dbReference>
<dbReference type="GO" id="GO:0019843">
    <property type="term" value="F:rRNA binding"/>
    <property type="evidence" value="ECO:0007669"/>
    <property type="project" value="UniProtKB-UniRule"/>
</dbReference>
<dbReference type="GO" id="GO:0003735">
    <property type="term" value="F:structural constituent of ribosome"/>
    <property type="evidence" value="ECO:0007669"/>
    <property type="project" value="InterPro"/>
</dbReference>
<dbReference type="GO" id="GO:0016740">
    <property type="term" value="F:transferase activity"/>
    <property type="evidence" value="ECO:0007669"/>
    <property type="project" value="InterPro"/>
</dbReference>
<dbReference type="GO" id="GO:0032543">
    <property type="term" value="P:mitochondrial translation"/>
    <property type="evidence" value="ECO:0007669"/>
    <property type="project" value="TreeGrafter"/>
</dbReference>
<dbReference type="FunFam" id="4.10.950.10:FF:000001">
    <property type="entry name" value="50S ribosomal protein L2"/>
    <property type="match status" value="1"/>
</dbReference>
<dbReference type="FunFam" id="2.30.30.30:FF:000008">
    <property type="entry name" value="50S ribosomal protein L2, chloroplastic"/>
    <property type="match status" value="1"/>
</dbReference>
<dbReference type="FunFam" id="2.40.50.140:FF:000029">
    <property type="entry name" value="50S ribosomal protein L2, chloroplastic"/>
    <property type="match status" value="1"/>
</dbReference>
<dbReference type="Gene3D" id="2.30.30.30">
    <property type="match status" value="1"/>
</dbReference>
<dbReference type="Gene3D" id="2.40.50.140">
    <property type="entry name" value="Nucleic acid-binding proteins"/>
    <property type="match status" value="1"/>
</dbReference>
<dbReference type="Gene3D" id="4.10.950.10">
    <property type="entry name" value="Ribosomal protein L2, domain 3"/>
    <property type="match status" value="1"/>
</dbReference>
<dbReference type="HAMAP" id="MF_01320_B">
    <property type="entry name" value="Ribosomal_uL2_B"/>
    <property type="match status" value="1"/>
</dbReference>
<dbReference type="InterPro" id="IPR012340">
    <property type="entry name" value="NA-bd_OB-fold"/>
</dbReference>
<dbReference type="InterPro" id="IPR014722">
    <property type="entry name" value="Rib_uL2_dom2"/>
</dbReference>
<dbReference type="InterPro" id="IPR002171">
    <property type="entry name" value="Ribosomal_uL2"/>
</dbReference>
<dbReference type="InterPro" id="IPR005880">
    <property type="entry name" value="Ribosomal_uL2_bac/org-type"/>
</dbReference>
<dbReference type="InterPro" id="IPR022669">
    <property type="entry name" value="Ribosomal_uL2_C"/>
</dbReference>
<dbReference type="InterPro" id="IPR022671">
    <property type="entry name" value="Ribosomal_uL2_CS"/>
</dbReference>
<dbReference type="InterPro" id="IPR014726">
    <property type="entry name" value="Ribosomal_uL2_dom3"/>
</dbReference>
<dbReference type="InterPro" id="IPR022666">
    <property type="entry name" value="Ribosomal_uL2_RNA-bd_dom"/>
</dbReference>
<dbReference type="InterPro" id="IPR008991">
    <property type="entry name" value="Translation_prot_SH3-like_sf"/>
</dbReference>
<dbReference type="NCBIfam" id="TIGR01171">
    <property type="entry name" value="rplB_bact"/>
    <property type="match status" value="1"/>
</dbReference>
<dbReference type="PANTHER" id="PTHR13691:SF57">
    <property type="entry name" value="LARGE RIBOSOMAL SUBUNIT PROTEIN UL2CZ_UL2CY"/>
    <property type="match status" value="1"/>
</dbReference>
<dbReference type="PANTHER" id="PTHR13691">
    <property type="entry name" value="RIBOSOMAL PROTEIN L2"/>
    <property type="match status" value="1"/>
</dbReference>
<dbReference type="Pfam" id="PF00181">
    <property type="entry name" value="Ribosomal_L2"/>
    <property type="match status" value="1"/>
</dbReference>
<dbReference type="Pfam" id="PF03947">
    <property type="entry name" value="Ribosomal_L2_C"/>
    <property type="match status" value="1"/>
</dbReference>
<dbReference type="PIRSF" id="PIRSF002158">
    <property type="entry name" value="Ribosomal_L2"/>
    <property type="match status" value="1"/>
</dbReference>
<dbReference type="SMART" id="SM01383">
    <property type="entry name" value="Ribosomal_L2"/>
    <property type="match status" value="1"/>
</dbReference>
<dbReference type="SMART" id="SM01382">
    <property type="entry name" value="Ribosomal_L2_C"/>
    <property type="match status" value="1"/>
</dbReference>
<dbReference type="SUPFAM" id="SSF50249">
    <property type="entry name" value="Nucleic acid-binding proteins"/>
    <property type="match status" value="1"/>
</dbReference>
<dbReference type="SUPFAM" id="SSF50104">
    <property type="entry name" value="Translation proteins SH3-like domain"/>
    <property type="match status" value="1"/>
</dbReference>
<dbReference type="PROSITE" id="PS00467">
    <property type="entry name" value="RIBOSOMAL_L2"/>
    <property type="match status" value="1"/>
</dbReference>
<reference key="1">
    <citation type="journal article" date="1994" name="Plant Cell">
        <title>Inefficient rpl2 splicing in barley mutants with ribosome-deficient plastids.</title>
        <authorList>
            <person name="Hess W.R."/>
            <person name="Hoch B."/>
            <person name="Zeltz P."/>
            <person name="Huebschmann T."/>
            <person name="Koessel H."/>
            <person name="Boerner T."/>
        </authorList>
    </citation>
    <scope>NUCLEOTIDE SEQUENCE [GENOMIC DNA]</scope>
    <scope>RNA EDITING OF INITIATOR CODON</scope>
    <source>
        <strain>cv. Haisa</strain>
    </source>
</reference>
<reference key="2">
    <citation type="journal article" date="2007" name="Theor. Appl. Genet.">
        <title>Complete chloroplast genome sequences of Hordeum vulgare, Sorghum bicolor and Agrostis stolonifera, and comparative analyses with other grass genomes.</title>
        <authorList>
            <person name="Saski C."/>
            <person name="Lee S.-B."/>
            <person name="Fjellheim S."/>
            <person name="Guda C."/>
            <person name="Jansen R.K."/>
            <person name="Luo H."/>
            <person name="Tomkins J."/>
            <person name="Rognli O.A."/>
            <person name="Daniell H."/>
            <person name="Clarke J.L."/>
        </authorList>
    </citation>
    <scope>NUCLEOTIDE SEQUENCE [LARGE SCALE GENOMIC DNA]</scope>
    <source>
        <strain>cv. Morex</strain>
    </source>
</reference>